<evidence type="ECO:0000250" key="1">
    <source>
        <dbReference type="UniProtKB" id="P02753"/>
    </source>
</evidence>
<evidence type="ECO:0000250" key="2">
    <source>
        <dbReference type="UniProtKB" id="P27485"/>
    </source>
</evidence>
<evidence type="ECO:0000305" key="3"/>
<evidence type="ECO:0007744" key="4">
    <source>
    </source>
</evidence>
<comment type="function">
    <text evidence="1">Retinol-binding protein that mediates retinol transport in blood plasma. Delivers retinol from the liver stores to the peripheral tissues. Transfers the bound all-trans retinol to STRA6, that then facilitates retinol transport across the cell membrane.</text>
</comment>
<comment type="subunit">
    <text evidence="1">Interacts with TTR. Interaction with TTR prevents its loss by filtration through the kidney glomeruli. Interacts with STRA6.</text>
</comment>
<comment type="subcellular location">
    <subcellularLocation>
        <location evidence="1">Secreted</location>
    </subcellularLocation>
</comment>
<comment type="similarity">
    <text evidence="3">Belongs to the calycin superfamily. Lipocalin family.</text>
</comment>
<protein>
    <recommendedName>
        <fullName>Retinol-binding protein 4</fullName>
    </recommendedName>
    <alternativeName>
        <fullName>Plasma retinol-binding protein</fullName>
        <shortName>PRBP</shortName>
        <shortName>RBP</shortName>
    </alternativeName>
</protein>
<sequence length="201" mass="23206">MEWVWALVLLAALGGGSAERDCRVSSFRVKENFDKARFSGLWYAIAKKDPEGLFLQDNIIAEFSVDEKGHMSATAKGRVRLLSNWEVCADMVGTFTDTEDPAKFKMKYWGVASFLQRGNDDHWIIDTDYDTFALQYSCRLQNLDGTCADSYSFVFSRDPNGLSPETRRLVRQRQEELCLERQYRWIEHNGYCQSRPSRNSL</sequence>
<keyword id="KW-1015">Disulfide bond</keyword>
<keyword id="KW-0488">Methylation</keyword>
<keyword id="KW-1185">Reference proteome</keyword>
<keyword id="KW-0683">Retinol-binding</keyword>
<keyword id="KW-0964">Secreted</keyword>
<keyword id="KW-0732">Signal</keyword>
<keyword id="KW-0813">Transport</keyword>
<keyword id="KW-0845">Vitamin A</keyword>
<gene>
    <name type="primary">Rbp4</name>
</gene>
<name>RET4_MOUSE</name>
<reference key="1">
    <citation type="journal article" date="1998" name="Arch. Biochem. Biophys.">
        <title>Induction of mouse retinol binding protein gene expression by cyclic AMP in Hepa 1-6 cells.</title>
        <authorList>
            <person name="Jessen K.A."/>
            <person name="Satre M.A."/>
        </authorList>
    </citation>
    <scope>NUCLEOTIDE SEQUENCE [MRNA]</scope>
    <source>
        <strain>C57BL/6 X CBA</strain>
    </source>
</reference>
<reference key="2">
    <citation type="submission" date="2003-10" db="EMBL/GenBank/DDBJ databases">
        <title>Genomic sequence of mouse retinol binding protein 4 region, complete sequence.</title>
        <authorList>
            <person name="Maekawa K."/>
            <person name="Kojima T."/>
            <person name="Fujiyama A."/>
            <person name="Hattori M."/>
            <person name="Sakaki Y."/>
        </authorList>
    </citation>
    <scope>NUCLEOTIDE SEQUENCE [GENOMIC DNA]</scope>
</reference>
<reference key="3">
    <citation type="journal article" date="2005" name="Science">
        <title>The transcriptional landscape of the mammalian genome.</title>
        <authorList>
            <person name="Carninci P."/>
            <person name="Kasukawa T."/>
            <person name="Katayama S."/>
            <person name="Gough J."/>
            <person name="Frith M.C."/>
            <person name="Maeda N."/>
            <person name="Oyama R."/>
            <person name="Ravasi T."/>
            <person name="Lenhard B."/>
            <person name="Wells C."/>
            <person name="Kodzius R."/>
            <person name="Shimokawa K."/>
            <person name="Bajic V.B."/>
            <person name="Brenner S.E."/>
            <person name="Batalov S."/>
            <person name="Forrest A.R."/>
            <person name="Zavolan M."/>
            <person name="Davis M.J."/>
            <person name="Wilming L.G."/>
            <person name="Aidinis V."/>
            <person name="Allen J.E."/>
            <person name="Ambesi-Impiombato A."/>
            <person name="Apweiler R."/>
            <person name="Aturaliya R.N."/>
            <person name="Bailey T.L."/>
            <person name="Bansal M."/>
            <person name="Baxter L."/>
            <person name="Beisel K.W."/>
            <person name="Bersano T."/>
            <person name="Bono H."/>
            <person name="Chalk A.M."/>
            <person name="Chiu K.P."/>
            <person name="Choudhary V."/>
            <person name="Christoffels A."/>
            <person name="Clutterbuck D.R."/>
            <person name="Crowe M.L."/>
            <person name="Dalla E."/>
            <person name="Dalrymple B.P."/>
            <person name="de Bono B."/>
            <person name="Della Gatta G."/>
            <person name="di Bernardo D."/>
            <person name="Down T."/>
            <person name="Engstrom P."/>
            <person name="Fagiolini M."/>
            <person name="Faulkner G."/>
            <person name="Fletcher C.F."/>
            <person name="Fukushima T."/>
            <person name="Furuno M."/>
            <person name="Futaki S."/>
            <person name="Gariboldi M."/>
            <person name="Georgii-Hemming P."/>
            <person name="Gingeras T.R."/>
            <person name="Gojobori T."/>
            <person name="Green R.E."/>
            <person name="Gustincich S."/>
            <person name="Harbers M."/>
            <person name="Hayashi Y."/>
            <person name="Hensch T.K."/>
            <person name="Hirokawa N."/>
            <person name="Hill D."/>
            <person name="Huminiecki L."/>
            <person name="Iacono M."/>
            <person name="Ikeo K."/>
            <person name="Iwama A."/>
            <person name="Ishikawa T."/>
            <person name="Jakt M."/>
            <person name="Kanapin A."/>
            <person name="Katoh M."/>
            <person name="Kawasawa Y."/>
            <person name="Kelso J."/>
            <person name="Kitamura H."/>
            <person name="Kitano H."/>
            <person name="Kollias G."/>
            <person name="Krishnan S.P."/>
            <person name="Kruger A."/>
            <person name="Kummerfeld S.K."/>
            <person name="Kurochkin I.V."/>
            <person name="Lareau L.F."/>
            <person name="Lazarevic D."/>
            <person name="Lipovich L."/>
            <person name="Liu J."/>
            <person name="Liuni S."/>
            <person name="McWilliam S."/>
            <person name="Madan Babu M."/>
            <person name="Madera M."/>
            <person name="Marchionni L."/>
            <person name="Matsuda H."/>
            <person name="Matsuzawa S."/>
            <person name="Miki H."/>
            <person name="Mignone F."/>
            <person name="Miyake S."/>
            <person name="Morris K."/>
            <person name="Mottagui-Tabar S."/>
            <person name="Mulder N."/>
            <person name="Nakano N."/>
            <person name="Nakauchi H."/>
            <person name="Ng P."/>
            <person name="Nilsson R."/>
            <person name="Nishiguchi S."/>
            <person name="Nishikawa S."/>
            <person name="Nori F."/>
            <person name="Ohara O."/>
            <person name="Okazaki Y."/>
            <person name="Orlando V."/>
            <person name="Pang K.C."/>
            <person name="Pavan W.J."/>
            <person name="Pavesi G."/>
            <person name="Pesole G."/>
            <person name="Petrovsky N."/>
            <person name="Piazza S."/>
            <person name="Reed J."/>
            <person name="Reid J.F."/>
            <person name="Ring B.Z."/>
            <person name="Ringwald M."/>
            <person name="Rost B."/>
            <person name="Ruan Y."/>
            <person name="Salzberg S.L."/>
            <person name="Sandelin A."/>
            <person name="Schneider C."/>
            <person name="Schoenbach C."/>
            <person name="Sekiguchi K."/>
            <person name="Semple C.A."/>
            <person name="Seno S."/>
            <person name="Sessa L."/>
            <person name="Sheng Y."/>
            <person name="Shibata Y."/>
            <person name="Shimada H."/>
            <person name="Shimada K."/>
            <person name="Silva D."/>
            <person name="Sinclair B."/>
            <person name="Sperling S."/>
            <person name="Stupka E."/>
            <person name="Sugiura K."/>
            <person name="Sultana R."/>
            <person name="Takenaka Y."/>
            <person name="Taki K."/>
            <person name="Tammoja K."/>
            <person name="Tan S.L."/>
            <person name="Tang S."/>
            <person name="Taylor M.S."/>
            <person name="Tegner J."/>
            <person name="Teichmann S.A."/>
            <person name="Ueda H.R."/>
            <person name="van Nimwegen E."/>
            <person name="Verardo R."/>
            <person name="Wei C.L."/>
            <person name="Yagi K."/>
            <person name="Yamanishi H."/>
            <person name="Zabarovsky E."/>
            <person name="Zhu S."/>
            <person name="Zimmer A."/>
            <person name="Hide W."/>
            <person name="Bult C."/>
            <person name="Grimmond S.M."/>
            <person name="Teasdale R.D."/>
            <person name="Liu E.T."/>
            <person name="Brusic V."/>
            <person name="Quackenbush J."/>
            <person name="Wahlestedt C."/>
            <person name="Mattick J.S."/>
            <person name="Hume D.A."/>
            <person name="Kai C."/>
            <person name="Sasaki D."/>
            <person name="Tomaru Y."/>
            <person name="Fukuda S."/>
            <person name="Kanamori-Katayama M."/>
            <person name="Suzuki M."/>
            <person name="Aoki J."/>
            <person name="Arakawa T."/>
            <person name="Iida J."/>
            <person name="Imamura K."/>
            <person name="Itoh M."/>
            <person name="Kato T."/>
            <person name="Kawaji H."/>
            <person name="Kawagashira N."/>
            <person name="Kawashima T."/>
            <person name="Kojima M."/>
            <person name="Kondo S."/>
            <person name="Konno H."/>
            <person name="Nakano K."/>
            <person name="Ninomiya N."/>
            <person name="Nishio T."/>
            <person name="Okada M."/>
            <person name="Plessy C."/>
            <person name="Shibata K."/>
            <person name="Shiraki T."/>
            <person name="Suzuki S."/>
            <person name="Tagami M."/>
            <person name="Waki K."/>
            <person name="Watahiki A."/>
            <person name="Okamura-Oho Y."/>
            <person name="Suzuki H."/>
            <person name="Kawai J."/>
            <person name="Hayashizaki Y."/>
        </authorList>
    </citation>
    <scope>NUCLEOTIDE SEQUENCE [LARGE SCALE MRNA]</scope>
    <source>
        <strain>C57BL/6J</strain>
        <tissue>Stomach</tissue>
    </source>
</reference>
<reference key="4">
    <citation type="journal article" date="2004" name="Genome Res.">
        <title>The status, quality, and expansion of the NIH full-length cDNA project: the Mammalian Gene Collection (MGC).</title>
        <authorList>
            <consortium name="The MGC Project Team"/>
        </authorList>
    </citation>
    <scope>NUCLEOTIDE SEQUENCE [LARGE SCALE MRNA]</scope>
    <source>
        <strain>FVB/N</strain>
        <tissue>Liver</tissue>
    </source>
</reference>
<reference key="5">
    <citation type="journal article" date="1992" name="J. Craniofac. Genet. Dev. Biol.">
        <title>Chromosomal localization of the retinol binding protein gene and its elimination as a candidate gene for the repeated epilation (Er) mutation in mice.</title>
        <authorList>
            <person name="Dale B."/>
            <person name="Jones A.H."/>
            <person name="Presland R."/>
            <person name="Adler D.A."/>
            <person name="Disteche C.M."/>
        </authorList>
    </citation>
    <scope>NUCLEOTIDE SEQUENCE [MRNA] OF 1-179</scope>
</reference>
<reference key="6">
    <citation type="journal article" date="2010" name="Cell">
        <title>A tissue-specific atlas of mouse protein phosphorylation and expression.</title>
        <authorList>
            <person name="Huttlin E.L."/>
            <person name="Jedrychowski M.P."/>
            <person name="Elias J.E."/>
            <person name="Goswami T."/>
            <person name="Rad R."/>
            <person name="Beausoleil S.A."/>
            <person name="Villen J."/>
            <person name="Haas W."/>
            <person name="Sowa M.E."/>
            <person name="Gygi S.P."/>
        </authorList>
    </citation>
    <scope>IDENTIFICATION BY MASS SPECTROMETRY [LARGE SCALE ANALYSIS]</scope>
    <source>
        <tissue>Brown adipose tissue</tissue>
        <tissue>Heart</tissue>
        <tissue>Kidney</tissue>
        <tissue>Liver</tissue>
        <tissue>Lung</tissue>
        <tissue>Pancreas</tissue>
        <tissue>Spleen</tissue>
        <tissue>Testis</tissue>
    </source>
</reference>
<reference key="7">
    <citation type="journal article" date="2014" name="Mol. Cell. Proteomics">
        <title>Immunoaffinity enrichment and mass spectrometry analysis of protein methylation.</title>
        <authorList>
            <person name="Guo A."/>
            <person name="Gu H."/>
            <person name="Zhou J."/>
            <person name="Mulhern D."/>
            <person name="Wang Y."/>
            <person name="Lee K.A."/>
            <person name="Yang V."/>
            <person name="Aguiar M."/>
            <person name="Kornhauser J."/>
            <person name="Jia X."/>
            <person name="Ren J."/>
            <person name="Beausoleil S.A."/>
            <person name="Silva J.C."/>
            <person name="Vemulapalli V."/>
            <person name="Bedford M.T."/>
            <person name="Comb M.J."/>
        </authorList>
    </citation>
    <scope>METHYLATION [LARGE SCALE ANALYSIS] AT ARG-139</scope>
    <scope>IDENTIFICATION BY MASS SPECTROMETRY [LARGE SCALE ANALYSIS]</scope>
    <source>
        <tissue>Brain</tissue>
    </source>
</reference>
<accession>Q00724</accession>
<accession>P70357</accession>
<accession>Q566I5</accession>
<dbReference type="EMBL" id="U63146">
    <property type="protein sequence ID" value="AAB06955.1"/>
    <property type="molecule type" value="mRNA"/>
</dbReference>
<dbReference type="EMBL" id="AB124638">
    <property type="protein sequence ID" value="BAD16678.1"/>
    <property type="molecule type" value="Genomic_DNA"/>
</dbReference>
<dbReference type="EMBL" id="AK008765">
    <property type="protein sequence ID" value="BAB25881.1"/>
    <property type="molecule type" value="mRNA"/>
</dbReference>
<dbReference type="EMBL" id="BC031809">
    <property type="protein sequence ID" value="AAH31809.1"/>
    <property type="molecule type" value="mRNA"/>
</dbReference>
<dbReference type="EMBL" id="BC093529">
    <property type="protein sequence ID" value="AAH93529.1"/>
    <property type="molecule type" value="mRNA"/>
</dbReference>
<dbReference type="EMBL" id="M74527">
    <property type="protein sequence ID" value="AAA63395.1"/>
    <property type="molecule type" value="mRNA"/>
</dbReference>
<dbReference type="CCDS" id="CCDS29784.1"/>
<dbReference type="RefSeq" id="NP_001152959.1">
    <property type="nucleotide sequence ID" value="NM_001159487.1"/>
</dbReference>
<dbReference type="RefSeq" id="NP_035385.1">
    <property type="nucleotide sequence ID" value="NM_011255.3"/>
</dbReference>
<dbReference type="SMR" id="Q00724"/>
<dbReference type="BioGRID" id="202830">
    <property type="interactions" value="3"/>
</dbReference>
<dbReference type="FunCoup" id="Q00724">
    <property type="interactions" value="63"/>
</dbReference>
<dbReference type="STRING" id="10090.ENSMUSP00000025951"/>
<dbReference type="GlyGen" id="Q00724">
    <property type="glycosylation" value="1 site, 1 O-linked glycan (1 site)"/>
</dbReference>
<dbReference type="iPTMnet" id="Q00724"/>
<dbReference type="PhosphoSitePlus" id="Q00724"/>
<dbReference type="SwissPalm" id="Q00724"/>
<dbReference type="CPTAC" id="non-CPTAC-3736"/>
<dbReference type="jPOST" id="Q00724"/>
<dbReference type="PaxDb" id="10090-ENSMUSP00000025951"/>
<dbReference type="ProteomicsDB" id="255289"/>
<dbReference type="Antibodypedia" id="885">
    <property type="antibodies" value="1499 antibodies from 45 providers"/>
</dbReference>
<dbReference type="DNASU" id="19662"/>
<dbReference type="Ensembl" id="ENSMUST00000112335.4">
    <property type="protein sequence ID" value="ENSMUSP00000107954.3"/>
    <property type="gene ID" value="ENSMUSG00000024990.14"/>
</dbReference>
<dbReference type="GeneID" id="19662"/>
<dbReference type="KEGG" id="mmu:19662"/>
<dbReference type="UCSC" id="uc008hjd.2">
    <property type="organism name" value="mouse"/>
</dbReference>
<dbReference type="AGR" id="MGI:97879"/>
<dbReference type="CTD" id="5950"/>
<dbReference type="MGI" id="MGI:97879">
    <property type="gene designation" value="Rbp4"/>
</dbReference>
<dbReference type="VEuPathDB" id="HostDB:ENSMUSG00000024990"/>
<dbReference type="eggNOG" id="ENOG502RXEW">
    <property type="taxonomic scope" value="Eukaryota"/>
</dbReference>
<dbReference type="GeneTree" id="ENSGT00510000047107"/>
<dbReference type="HOGENOM" id="CLU_094618_0_0_1"/>
<dbReference type="InParanoid" id="Q00724"/>
<dbReference type="OMA" id="KYWGMAS"/>
<dbReference type="OrthoDB" id="9923952at2759"/>
<dbReference type="PhylomeDB" id="Q00724"/>
<dbReference type="Reactome" id="R-MMU-2453902">
    <property type="pathway name" value="The canonical retinoid cycle in rods (twilight vision)"/>
</dbReference>
<dbReference type="Reactome" id="R-MMU-975634">
    <property type="pathway name" value="Retinoid metabolism and transport"/>
</dbReference>
<dbReference type="BioGRID-ORCS" id="19662">
    <property type="hits" value="1 hit in 78 CRISPR screens"/>
</dbReference>
<dbReference type="ChiTaRS" id="Rbp4">
    <property type="organism name" value="mouse"/>
</dbReference>
<dbReference type="PRO" id="PR:Q00724"/>
<dbReference type="Proteomes" id="UP000000589">
    <property type="component" value="Chromosome 19"/>
</dbReference>
<dbReference type="RNAct" id="Q00724">
    <property type="molecule type" value="protein"/>
</dbReference>
<dbReference type="Bgee" id="ENSMUSG00000024990">
    <property type="expression patterns" value="Expressed in left lobe of liver and 194 other cell types or tissues"/>
</dbReference>
<dbReference type="ExpressionAtlas" id="Q00724">
    <property type="expression patterns" value="baseline and differential"/>
</dbReference>
<dbReference type="GO" id="GO:0005576">
    <property type="term" value="C:extracellular region"/>
    <property type="evidence" value="ECO:0000314"/>
    <property type="project" value="MGI"/>
</dbReference>
<dbReference type="GO" id="GO:0005615">
    <property type="term" value="C:extracellular space"/>
    <property type="evidence" value="ECO:0000314"/>
    <property type="project" value="BHF-UCL"/>
</dbReference>
<dbReference type="GO" id="GO:0140104">
    <property type="term" value="F:molecular carrier activity"/>
    <property type="evidence" value="ECO:0000315"/>
    <property type="project" value="MGI"/>
</dbReference>
<dbReference type="GO" id="GO:0016918">
    <property type="term" value="F:retinal binding"/>
    <property type="evidence" value="ECO:0007669"/>
    <property type="project" value="UniProtKB-KW"/>
</dbReference>
<dbReference type="GO" id="GO:0019841">
    <property type="term" value="F:retinol binding"/>
    <property type="evidence" value="ECO:0000314"/>
    <property type="project" value="MGI"/>
</dbReference>
<dbReference type="GO" id="GO:0034632">
    <property type="term" value="F:retinol transmembrane transporter activity"/>
    <property type="evidence" value="ECO:0007669"/>
    <property type="project" value="InterPro"/>
</dbReference>
<dbReference type="GO" id="GO:0048738">
    <property type="term" value="P:cardiac muscle tissue development"/>
    <property type="evidence" value="ECO:0000315"/>
    <property type="project" value="BHF-UCL"/>
</dbReference>
<dbReference type="GO" id="GO:0050908">
    <property type="term" value="P:detection of light stimulus involved in visual perception"/>
    <property type="evidence" value="ECO:0000315"/>
    <property type="project" value="MGI"/>
</dbReference>
<dbReference type="GO" id="GO:0048562">
    <property type="term" value="P:embryonic organ morphogenesis"/>
    <property type="evidence" value="ECO:0000315"/>
    <property type="project" value="BHF-UCL"/>
</dbReference>
<dbReference type="GO" id="GO:0060059">
    <property type="term" value="P:embryonic retina morphogenesis in camera-type eye"/>
    <property type="evidence" value="ECO:0000315"/>
    <property type="project" value="BHF-UCL"/>
</dbReference>
<dbReference type="GO" id="GO:0048706">
    <property type="term" value="P:embryonic skeletal system development"/>
    <property type="evidence" value="ECO:0000315"/>
    <property type="project" value="BHF-UCL"/>
</dbReference>
<dbReference type="GO" id="GO:0001654">
    <property type="term" value="P:eye development"/>
    <property type="evidence" value="ECO:0000315"/>
    <property type="project" value="BHF-UCL"/>
</dbReference>
<dbReference type="GO" id="GO:0048807">
    <property type="term" value="P:female genitalia morphogenesis"/>
    <property type="evidence" value="ECO:0000315"/>
    <property type="project" value="BHF-UCL"/>
</dbReference>
<dbReference type="GO" id="GO:0006094">
    <property type="term" value="P:gluconeogenesis"/>
    <property type="evidence" value="ECO:0000315"/>
    <property type="project" value="BHF-UCL"/>
</dbReference>
<dbReference type="GO" id="GO:0042593">
    <property type="term" value="P:glucose homeostasis"/>
    <property type="evidence" value="ECO:0007669"/>
    <property type="project" value="Ensembl"/>
</dbReference>
<dbReference type="GO" id="GO:0007507">
    <property type="term" value="P:heart development"/>
    <property type="evidence" value="ECO:0000315"/>
    <property type="project" value="BHF-UCL"/>
</dbReference>
<dbReference type="GO" id="GO:0060347">
    <property type="term" value="P:heart trabecula formation"/>
    <property type="evidence" value="ECO:0000315"/>
    <property type="project" value="BHF-UCL"/>
</dbReference>
<dbReference type="GO" id="GO:0030324">
    <property type="term" value="P:lung development"/>
    <property type="evidence" value="ECO:0000315"/>
    <property type="project" value="BHF-UCL"/>
</dbReference>
<dbReference type="GO" id="GO:0030277">
    <property type="term" value="P:maintenance of gastrointestinal epithelium"/>
    <property type="evidence" value="ECO:0007669"/>
    <property type="project" value="Ensembl"/>
</dbReference>
<dbReference type="GO" id="GO:0008584">
    <property type="term" value="P:male gonad development"/>
    <property type="evidence" value="ECO:0000315"/>
    <property type="project" value="MGI"/>
</dbReference>
<dbReference type="GO" id="GO:0060044">
    <property type="term" value="P:negative regulation of cardiac muscle cell proliferation"/>
    <property type="evidence" value="ECO:0000315"/>
    <property type="project" value="BHF-UCL"/>
</dbReference>
<dbReference type="GO" id="GO:0007603">
    <property type="term" value="P:phototransduction, visible light"/>
    <property type="evidence" value="ECO:0000315"/>
    <property type="project" value="MGI"/>
</dbReference>
<dbReference type="GO" id="GO:0002639">
    <property type="term" value="P:positive regulation of immunoglobulin production"/>
    <property type="evidence" value="ECO:0000314"/>
    <property type="project" value="BHF-UCL"/>
</dbReference>
<dbReference type="GO" id="GO:0032024">
    <property type="term" value="P:positive regulation of insulin secretion"/>
    <property type="evidence" value="ECO:0007669"/>
    <property type="project" value="Ensembl"/>
</dbReference>
<dbReference type="GO" id="GO:0032868">
    <property type="term" value="P:response to insulin"/>
    <property type="evidence" value="ECO:0000315"/>
    <property type="project" value="MGI"/>
</dbReference>
<dbReference type="GO" id="GO:0032526">
    <property type="term" value="P:response to retinoic acid"/>
    <property type="evidence" value="ECO:0007669"/>
    <property type="project" value="Ensembl"/>
</dbReference>
<dbReference type="GO" id="GO:0060041">
    <property type="term" value="P:retina development in camera-type eye"/>
    <property type="evidence" value="ECO:0000315"/>
    <property type="project" value="MGI"/>
</dbReference>
<dbReference type="GO" id="GO:0042574">
    <property type="term" value="P:retinal metabolic process"/>
    <property type="evidence" value="ECO:0000315"/>
    <property type="project" value="MGI"/>
</dbReference>
<dbReference type="GO" id="GO:0001523">
    <property type="term" value="P:retinoid metabolic process"/>
    <property type="evidence" value="ECO:0000315"/>
    <property type="project" value="MGI"/>
</dbReference>
<dbReference type="GO" id="GO:0042572">
    <property type="term" value="P:retinol metabolic process"/>
    <property type="evidence" value="ECO:0000316"/>
    <property type="project" value="MGI"/>
</dbReference>
<dbReference type="GO" id="GO:0034633">
    <property type="term" value="P:retinol transport"/>
    <property type="evidence" value="ECO:0000315"/>
    <property type="project" value="MGI"/>
</dbReference>
<dbReference type="GO" id="GO:0007283">
    <property type="term" value="P:spermatogenesis"/>
    <property type="evidence" value="ECO:0000315"/>
    <property type="project" value="MGI"/>
</dbReference>
<dbReference type="GO" id="GO:0060157">
    <property type="term" value="P:urinary bladder development"/>
    <property type="evidence" value="ECO:0000315"/>
    <property type="project" value="BHF-UCL"/>
</dbReference>
<dbReference type="GO" id="GO:0060065">
    <property type="term" value="P:uterus development"/>
    <property type="evidence" value="ECO:0000315"/>
    <property type="project" value="BHF-UCL"/>
</dbReference>
<dbReference type="GO" id="GO:0060068">
    <property type="term" value="P:vagina development"/>
    <property type="evidence" value="ECO:0000315"/>
    <property type="project" value="BHF-UCL"/>
</dbReference>
<dbReference type="GO" id="GO:0071939">
    <property type="term" value="P:vitamin A import into cell"/>
    <property type="evidence" value="ECO:0000315"/>
    <property type="project" value="MGI"/>
</dbReference>
<dbReference type="CDD" id="cd00743">
    <property type="entry name" value="lipocalin_RBP_like"/>
    <property type="match status" value="1"/>
</dbReference>
<dbReference type="FunFam" id="2.40.128.20:FF:000004">
    <property type="entry name" value="Retinol-binding protein 4"/>
    <property type="match status" value="1"/>
</dbReference>
<dbReference type="Gene3D" id="2.40.128.20">
    <property type="match status" value="1"/>
</dbReference>
<dbReference type="InterPro" id="IPR012674">
    <property type="entry name" value="Calycin"/>
</dbReference>
<dbReference type="InterPro" id="IPR022271">
    <property type="entry name" value="Lipocalin_ApoD"/>
</dbReference>
<dbReference type="InterPro" id="IPR022272">
    <property type="entry name" value="Lipocalin_CS"/>
</dbReference>
<dbReference type="InterPro" id="IPR000566">
    <property type="entry name" value="Lipocln_cytosolic_FA-bd_dom"/>
</dbReference>
<dbReference type="InterPro" id="IPR002449">
    <property type="entry name" value="Retinol-bd/Purpurin"/>
</dbReference>
<dbReference type="PANTHER" id="PTHR11873">
    <property type="entry name" value="RETINOL-BINDING PROTEIN 4"/>
    <property type="match status" value="1"/>
</dbReference>
<dbReference type="PANTHER" id="PTHR11873:SF2">
    <property type="entry name" value="RETINOL-BINDING PROTEIN 4"/>
    <property type="match status" value="1"/>
</dbReference>
<dbReference type="Pfam" id="PF00061">
    <property type="entry name" value="Lipocalin"/>
    <property type="match status" value="1"/>
</dbReference>
<dbReference type="PIRSF" id="PIRSF036893">
    <property type="entry name" value="Lipocalin_ApoD"/>
    <property type="match status" value="1"/>
</dbReference>
<dbReference type="PIRSF" id="PIRSF500204">
    <property type="entry name" value="RBP_purpurin"/>
    <property type="match status" value="1"/>
</dbReference>
<dbReference type="PRINTS" id="PR00179">
    <property type="entry name" value="LIPOCALIN"/>
</dbReference>
<dbReference type="PRINTS" id="PR01174">
    <property type="entry name" value="RETINOLBNDNG"/>
</dbReference>
<dbReference type="SUPFAM" id="SSF50814">
    <property type="entry name" value="Lipocalins"/>
    <property type="match status" value="1"/>
</dbReference>
<dbReference type="PROSITE" id="PS00213">
    <property type="entry name" value="LIPOCALIN"/>
    <property type="match status" value="1"/>
</dbReference>
<organism>
    <name type="scientific">Mus musculus</name>
    <name type="common">Mouse</name>
    <dbReference type="NCBI Taxonomy" id="10090"/>
    <lineage>
        <taxon>Eukaryota</taxon>
        <taxon>Metazoa</taxon>
        <taxon>Chordata</taxon>
        <taxon>Craniata</taxon>
        <taxon>Vertebrata</taxon>
        <taxon>Euteleostomi</taxon>
        <taxon>Mammalia</taxon>
        <taxon>Eutheria</taxon>
        <taxon>Euarchontoglires</taxon>
        <taxon>Glires</taxon>
        <taxon>Rodentia</taxon>
        <taxon>Myomorpha</taxon>
        <taxon>Muroidea</taxon>
        <taxon>Muridae</taxon>
        <taxon>Murinae</taxon>
        <taxon>Mus</taxon>
        <taxon>Mus</taxon>
    </lineage>
</organism>
<proteinExistence type="evidence at protein level"/>
<feature type="signal peptide" evidence="1">
    <location>
        <begin position="1"/>
        <end position="18"/>
    </location>
</feature>
<feature type="chain" id="PRO_0000017966" description="Retinol-binding protein 4">
    <location>
        <begin position="19"/>
        <end position="201"/>
    </location>
</feature>
<feature type="binding site" evidence="2">
    <location>
        <position position="116"/>
    </location>
    <ligand>
        <name>substrate</name>
    </ligand>
</feature>
<feature type="modified residue" description="Omega-N-methylarginine" evidence="4">
    <location>
        <position position="139"/>
    </location>
</feature>
<feature type="disulfide bond" evidence="1">
    <location>
        <begin position="22"/>
        <end position="178"/>
    </location>
</feature>
<feature type="disulfide bond" evidence="1">
    <location>
        <begin position="88"/>
        <end position="192"/>
    </location>
</feature>
<feature type="disulfide bond" evidence="1">
    <location>
        <begin position="138"/>
        <end position="147"/>
    </location>
</feature>
<feature type="sequence conflict" description="In Ref. 5; AAA63395." evidence="3" ref="5">
    <original>S</original>
    <variation>T</variation>
    <location>
        <position position="17"/>
    </location>
</feature>
<feature type="sequence conflict" description="In Ref. 5; AAA63395." evidence="3" ref="5">
    <original>R</original>
    <variation>P</variation>
    <location>
        <position position="20"/>
    </location>
</feature>